<proteinExistence type="inferred from homology"/>
<feature type="chain" id="PRO_1000202715" description="Peptide chain release factor 2">
    <location>
        <begin position="1"/>
        <end position="365"/>
    </location>
</feature>
<feature type="modified residue" description="N5-methylglutamine" evidence="1">
    <location>
        <position position="252"/>
    </location>
</feature>
<dbReference type="EMBL" id="CP001616">
    <property type="protein sequence ID" value="ACQ92603.1"/>
    <property type="molecule type" value="Genomic_DNA"/>
</dbReference>
<dbReference type="RefSeq" id="WP_012729202.1">
    <property type="nucleotide sequence ID" value="NC_012691.1"/>
</dbReference>
<dbReference type="SMR" id="C4LCN9"/>
<dbReference type="STRING" id="595494.Tola_0975"/>
<dbReference type="KEGG" id="tau:Tola_0975"/>
<dbReference type="eggNOG" id="COG1186">
    <property type="taxonomic scope" value="Bacteria"/>
</dbReference>
<dbReference type="HOGENOM" id="CLU_220733_2_1_6"/>
<dbReference type="OrthoDB" id="9806673at2"/>
<dbReference type="Proteomes" id="UP000009073">
    <property type="component" value="Chromosome"/>
</dbReference>
<dbReference type="GO" id="GO:0005737">
    <property type="term" value="C:cytoplasm"/>
    <property type="evidence" value="ECO:0007669"/>
    <property type="project" value="UniProtKB-SubCell"/>
</dbReference>
<dbReference type="GO" id="GO:0016149">
    <property type="term" value="F:translation release factor activity, codon specific"/>
    <property type="evidence" value="ECO:0007669"/>
    <property type="project" value="UniProtKB-UniRule"/>
</dbReference>
<dbReference type="FunFam" id="3.30.160.20:FF:000010">
    <property type="entry name" value="Peptide chain release factor 2"/>
    <property type="match status" value="1"/>
</dbReference>
<dbReference type="Gene3D" id="3.30.160.20">
    <property type="match status" value="1"/>
</dbReference>
<dbReference type="Gene3D" id="3.30.70.1660">
    <property type="match status" value="1"/>
</dbReference>
<dbReference type="Gene3D" id="1.20.58.410">
    <property type="entry name" value="Release factor"/>
    <property type="match status" value="1"/>
</dbReference>
<dbReference type="HAMAP" id="MF_00094">
    <property type="entry name" value="Rel_fac_2"/>
    <property type="match status" value="1"/>
</dbReference>
<dbReference type="InterPro" id="IPR005139">
    <property type="entry name" value="PCRF"/>
</dbReference>
<dbReference type="InterPro" id="IPR000352">
    <property type="entry name" value="Pep_chain_release_fac_I"/>
</dbReference>
<dbReference type="InterPro" id="IPR045853">
    <property type="entry name" value="Pep_chain_release_fac_I_sf"/>
</dbReference>
<dbReference type="InterPro" id="IPR004374">
    <property type="entry name" value="PrfB"/>
</dbReference>
<dbReference type="NCBIfam" id="TIGR00020">
    <property type="entry name" value="prfB"/>
    <property type="match status" value="1"/>
</dbReference>
<dbReference type="PANTHER" id="PTHR43116:SF3">
    <property type="entry name" value="CLASS I PEPTIDE CHAIN RELEASE FACTOR"/>
    <property type="match status" value="1"/>
</dbReference>
<dbReference type="PANTHER" id="PTHR43116">
    <property type="entry name" value="PEPTIDE CHAIN RELEASE FACTOR 2"/>
    <property type="match status" value="1"/>
</dbReference>
<dbReference type="Pfam" id="PF03462">
    <property type="entry name" value="PCRF"/>
    <property type="match status" value="1"/>
</dbReference>
<dbReference type="Pfam" id="PF00472">
    <property type="entry name" value="RF-1"/>
    <property type="match status" value="1"/>
</dbReference>
<dbReference type="SMART" id="SM00937">
    <property type="entry name" value="PCRF"/>
    <property type="match status" value="1"/>
</dbReference>
<dbReference type="SUPFAM" id="SSF75620">
    <property type="entry name" value="Release factor"/>
    <property type="match status" value="1"/>
</dbReference>
<dbReference type="PROSITE" id="PS00745">
    <property type="entry name" value="RF_PROK_I"/>
    <property type="match status" value="1"/>
</dbReference>
<accession>C4LCN9</accession>
<comment type="function">
    <text evidence="1">Peptide chain release factor 2 directs the termination of translation in response to the peptide chain termination codons UGA and UAA.</text>
</comment>
<comment type="subcellular location">
    <subcellularLocation>
        <location evidence="1">Cytoplasm</location>
    </subcellularLocation>
</comment>
<comment type="PTM">
    <text evidence="1">Methylated by PrmC. Methylation increases the termination efficiency of RF2.</text>
</comment>
<comment type="similarity">
    <text evidence="1">Belongs to the prokaryotic/mitochondrial release factor family.</text>
</comment>
<sequence>MFEVNPVLNKLKELSERTELLRGYLDYDAKKERLEEVSAELEQPEVWNEPERAQALGKERSALESVVATIDVLTQGAEDVEMLVSLAVEGEDEETFHEAETEADALEKKLVDLEFRRMFSGQHDASDCYMDIQSGSGGTEAQDWADMVLRMYLRWGEAHGYKPELIECSDGDVAGIKSATIKFTGEYAFGWLRTETGVHRLVRKSPFDSGGRRHTSFCSAFVYPEIDEDVEIEINPADLRIDVYRASGAGGQHVNRTESAVRITHIPTNTVTQCQNDRSQHKNKDQAMKQLKAKLYELEMMKQNAEKQALEETKSDIGWGSQIRSYVLDDSRIKDLRTGVETRNTQSVLDGDLDKFIEASLKSGL</sequence>
<name>RF2_TOLAT</name>
<keyword id="KW-0963">Cytoplasm</keyword>
<keyword id="KW-0488">Methylation</keyword>
<keyword id="KW-0648">Protein biosynthesis</keyword>
<keyword id="KW-1185">Reference proteome</keyword>
<reference key="1">
    <citation type="submission" date="2009-05" db="EMBL/GenBank/DDBJ databases">
        <title>Complete sequence of Tolumonas auensis DSM 9187.</title>
        <authorList>
            <consortium name="US DOE Joint Genome Institute"/>
            <person name="Lucas S."/>
            <person name="Copeland A."/>
            <person name="Lapidus A."/>
            <person name="Glavina del Rio T."/>
            <person name="Tice H."/>
            <person name="Bruce D."/>
            <person name="Goodwin L."/>
            <person name="Pitluck S."/>
            <person name="Chertkov O."/>
            <person name="Brettin T."/>
            <person name="Detter J.C."/>
            <person name="Han C."/>
            <person name="Larimer F."/>
            <person name="Land M."/>
            <person name="Hauser L."/>
            <person name="Kyrpides N."/>
            <person name="Mikhailova N."/>
            <person name="Spring S."/>
            <person name="Beller H."/>
        </authorList>
    </citation>
    <scope>NUCLEOTIDE SEQUENCE [LARGE SCALE GENOMIC DNA]</scope>
    <source>
        <strain>DSM 9187 / NBRC 110442 / TA 4</strain>
    </source>
</reference>
<evidence type="ECO:0000255" key="1">
    <source>
        <dbReference type="HAMAP-Rule" id="MF_00094"/>
    </source>
</evidence>
<organism>
    <name type="scientific">Tolumonas auensis (strain DSM 9187 / NBRC 110442 / TA 4)</name>
    <dbReference type="NCBI Taxonomy" id="595494"/>
    <lineage>
        <taxon>Bacteria</taxon>
        <taxon>Pseudomonadati</taxon>
        <taxon>Pseudomonadota</taxon>
        <taxon>Gammaproteobacteria</taxon>
        <taxon>Aeromonadales</taxon>
        <taxon>Aeromonadaceae</taxon>
        <taxon>Tolumonas</taxon>
    </lineage>
</organism>
<protein>
    <recommendedName>
        <fullName evidence="1">Peptide chain release factor 2</fullName>
        <shortName evidence="1">RF-2</shortName>
    </recommendedName>
</protein>
<gene>
    <name evidence="1" type="primary">prfB</name>
    <name type="ordered locus">Tola_0975</name>
</gene>